<organism>
    <name type="scientific">Rattus norvegicus</name>
    <name type="common">Rat</name>
    <dbReference type="NCBI Taxonomy" id="10116"/>
    <lineage>
        <taxon>Eukaryota</taxon>
        <taxon>Metazoa</taxon>
        <taxon>Chordata</taxon>
        <taxon>Craniata</taxon>
        <taxon>Vertebrata</taxon>
        <taxon>Euteleostomi</taxon>
        <taxon>Mammalia</taxon>
        <taxon>Eutheria</taxon>
        <taxon>Euarchontoglires</taxon>
        <taxon>Glires</taxon>
        <taxon>Rodentia</taxon>
        <taxon>Myomorpha</taxon>
        <taxon>Muroidea</taxon>
        <taxon>Muridae</taxon>
        <taxon>Murinae</taxon>
        <taxon>Rattus</taxon>
    </lineage>
</organism>
<accession>Q3T1I3</accession>
<proteinExistence type="evidence at transcript level"/>
<keyword id="KW-0175">Coiled coil</keyword>
<keyword id="KW-1185">Reference proteome</keyword>
<protein>
    <recommendedName>
        <fullName evidence="4">Harmonin-binding protein USHBP1</fullName>
    </recommendedName>
    <alternativeName>
        <fullName>Usher syndrome type-1C protein-binding protein 1</fullName>
        <shortName>USH1C-binding protein 1</shortName>
    </alternativeName>
</protein>
<comment type="subunit">
    <text evidence="1">Interacts via its C-terminus with the first PDZ domain of USH1C.</text>
</comment>
<comment type="similarity">
    <text evidence="4">Belongs to the MCC family.</text>
</comment>
<name>USBP1_RAT</name>
<feature type="chain" id="PRO_0000244493" description="Harmonin-binding protein USHBP1">
    <location>
        <begin position="1"/>
        <end position="680"/>
    </location>
</feature>
<feature type="region of interest" description="Disordered" evidence="3">
    <location>
        <begin position="1"/>
        <end position="101"/>
    </location>
</feature>
<feature type="region of interest" description="Disordered" evidence="3">
    <location>
        <begin position="135"/>
        <end position="162"/>
    </location>
</feature>
<feature type="region of interest" description="Disordered" evidence="3">
    <location>
        <begin position="217"/>
        <end position="250"/>
    </location>
</feature>
<feature type="region of interest" description="Disordered" evidence="3">
    <location>
        <begin position="524"/>
        <end position="562"/>
    </location>
</feature>
<feature type="coiled-coil region" evidence="2">
    <location>
        <begin position="177"/>
        <end position="219"/>
    </location>
</feature>
<feature type="coiled-coil region" evidence="2">
    <location>
        <begin position="362"/>
        <end position="386"/>
    </location>
</feature>
<feature type="coiled-coil region" evidence="2">
    <location>
        <begin position="479"/>
        <end position="506"/>
    </location>
</feature>
<feature type="coiled-coil region" evidence="2">
    <location>
        <begin position="573"/>
        <end position="661"/>
    </location>
</feature>
<feature type="compositionally biased region" description="Basic residues" evidence="3">
    <location>
        <begin position="1"/>
        <end position="15"/>
    </location>
</feature>
<feature type="compositionally biased region" description="Basic and acidic residues" evidence="3">
    <location>
        <begin position="76"/>
        <end position="86"/>
    </location>
</feature>
<evidence type="ECO:0000250" key="1">
    <source>
        <dbReference type="UniProtKB" id="Q8N6Y0"/>
    </source>
</evidence>
<evidence type="ECO:0000255" key="2"/>
<evidence type="ECO:0000256" key="3">
    <source>
        <dbReference type="SAM" id="MobiDB-lite"/>
    </source>
</evidence>
<evidence type="ECO:0000305" key="4"/>
<evidence type="ECO:0000312" key="5">
    <source>
        <dbReference type="EMBL" id="AAI01906.1"/>
    </source>
</evidence>
<dbReference type="EMBL" id="BC101905">
    <property type="protein sequence ID" value="AAI01906.1"/>
    <property type="molecule type" value="mRNA"/>
</dbReference>
<dbReference type="RefSeq" id="NP_001028859.1">
    <property type="nucleotide sequence ID" value="NM_001033687.1"/>
</dbReference>
<dbReference type="SMR" id="Q3T1I3"/>
<dbReference type="FunCoup" id="Q3T1I3">
    <property type="interactions" value="84"/>
</dbReference>
<dbReference type="STRING" id="10116.ENSRNOP00000042639"/>
<dbReference type="GlyGen" id="Q3T1I3">
    <property type="glycosylation" value="1 site"/>
</dbReference>
<dbReference type="PhosphoSitePlus" id="Q3T1I3"/>
<dbReference type="PaxDb" id="10116-ENSRNOP00000042639"/>
<dbReference type="Ensembl" id="ENSRNOT00000040393.5">
    <property type="protein sequence ID" value="ENSRNOP00000042639.3"/>
    <property type="gene ID" value="ENSRNOG00000023485.6"/>
</dbReference>
<dbReference type="GeneID" id="290629"/>
<dbReference type="KEGG" id="rno:290629"/>
<dbReference type="UCSC" id="RGD:1310859">
    <property type="organism name" value="rat"/>
</dbReference>
<dbReference type="AGR" id="RGD:1310859"/>
<dbReference type="CTD" id="83878"/>
<dbReference type="RGD" id="1310859">
    <property type="gene designation" value="Ushbp1"/>
</dbReference>
<dbReference type="eggNOG" id="KOG3512">
    <property type="taxonomic scope" value="Eukaryota"/>
</dbReference>
<dbReference type="GeneTree" id="ENSGT00530000063974"/>
<dbReference type="HOGENOM" id="CLU_024579_0_0_1"/>
<dbReference type="InParanoid" id="Q3T1I3"/>
<dbReference type="OMA" id="RELCKAH"/>
<dbReference type="OrthoDB" id="91977at9989"/>
<dbReference type="PhylomeDB" id="Q3T1I3"/>
<dbReference type="TreeFam" id="TF105384"/>
<dbReference type="PRO" id="PR:Q3T1I3"/>
<dbReference type="Proteomes" id="UP000002494">
    <property type="component" value="Chromosome 16"/>
</dbReference>
<dbReference type="Bgee" id="ENSRNOG00000023485">
    <property type="expression patterns" value="Expressed in lung and 19 other cell types or tissues"/>
</dbReference>
<dbReference type="GO" id="GO:0030165">
    <property type="term" value="F:PDZ domain binding"/>
    <property type="evidence" value="ECO:0000266"/>
    <property type="project" value="RGD"/>
</dbReference>
<dbReference type="InterPro" id="IPR040171">
    <property type="entry name" value="USBP1-like"/>
</dbReference>
<dbReference type="InterPro" id="IPR019536">
    <property type="entry name" value="USHBP1_PDZ-bd"/>
</dbReference>
<dbReference type="PANTHER" id="PTHR23347">
    <property type="entry name" value="COLORECTAL MUTANT CANCER PROTEIN MCC PROTEIN -RELATED"/>
    <property type="match status" value="1"/>
</dbReference>
<dbReference type="PANTHER" id="PTHR23347:SF5">
    <property type="entry name" value="HARMONIN-BINDING PROTEIN USHBP1"/>
    <property type="match status" value="1"/>
</dbReference>
<dbReference type="Pfam" id="PF10506">
    <property type="entry name" value="USHBP1_PDZ-bd"/>
    <property type="match status" value="1"/>
</dbReference>
<gene>
    <name evidence="5" type="primary">Ushbp1</name>
</gene>
<sequence length="680" mass="74612">MSARATRPRSRRGRHPLPGELDPVAESSEEVDTTNGSFETKPELLQEHLGPSLQGPGNRIKEDCDVGSHGVLPLSPEERREPEVEAHQALQEAPLDTGPAEITAPNVYETLKCRLSSLEAVVAAWRRHSLSFSKPVEAEDRDPGAPGSFGNEEEASGPGQQEAAHFIERNAWLRLALGTREEELARTQASLQDAQAENETLQRQVQELEDSLMQLEASPPPSMLRAGRRNSNSSSSGAERRPWAPQDSPMAHPFLQRLRSDSSTQSFGCLSTQRPSPEMYLMEDQMGQLQGNIEKLKCFNRLLLAVLQGYKGRCESLSIKLGKREAEATALHLALQYSKDCEEVYEVLLALKTAGLGAGVGATNGDLQAAEKEASRLLVKKEVAMDVKTPQPSPEGSSVDKPTPEELAAQLHGYVQHLRERWALLKIPPVLDPATAPKPTMPHAEATVQTILEIQPGPTLPQLEKSQIQQDLAATRDGLADLVLRLQLAQREKRGLELREAALRAQGPALRLLLQQLRWEQAHLMGDGSSGGSSEDPSSEEEAGEDRQQHYQGPPALLGGQMGKVWDSETVSQELSASLTRAVDLRAQLQSLRRQLEQMAQKGRTRGAQSAELNRELCKAHSALALAFREAHRKQEEQCRKLEQQMARMQAQQAEELAVLTATARALGDPGAPQPVQTFL</sequence>
<reference key="1">
    <citation type="journal article" date="2004" name="Genome Res.">
        <title>The status, quality, and expansion of the NIH full-length cDNA project: the Mammalian Gene Collection (MGC).</title>
        <authorList>
            <consortium name="The MGC Project Team"/>
        </authorList>
    </citation>
    <scope>NUCLEOTIDE SEQUENCE [LARGE SCALE MRNA]</scope>
    <source>
        <tissue>Prostate</tissue>
    </source>
</reference>